<dbReference type="EC" id="4.2.1.10" evidence="1"/>
<dbReference type="EMBL" id="CP000262">
    <property type="protein sequence ID" value="ABF37661.1"/>
    <property type="molecule type" value="Genomic_DNA"/>
</dbReference>
<dbReference type="SMR" id="Q1J7B3"/>
<dbReference type="KEGG" id="spi:MGAS10750_Spy0711"/>
<dbReference type="HOGENOM" id="CLU_064444_0_0_9"/>
<dbReference type="UniPathway" id="UPA00053">
    <property type="reaction ID" value="UER00086"/>
</dbReference>
<dbReference type="Proteomes" id="UP000002434">
    <property type="component" value="Chromosome"/>
</dbReference>
<dbReference type="GO" id="GO:0003855">
    <property type="term" value="F:3-dehydroquinate dehydratase activity"/>
    <property type="evidence" value="ECO:0007669"/>
    <property type="project" value="UniProtKB-UniRule"/>
</dbReference>
<dbReference type="GO" id="GO:0046279">
    <property type="term" value="P:3,4-dihydroxybenzoate biosynthetic process"/>
    <property type="evidence" value="ECO:0007669"/>
    <property type="project" value="UniProtKB-ARBA"/>
</dbReference>
<dbReference type="GO" id="GO:0008652">
    <property type="term" value="P:amino acid biosynthetic process"/>
    <property type="evidence" value="ECO:0007669"/>
    <property type="project" value="UniProtKB-KW"/>
</dbReference>
<dbReference type="GO" id="GO:0009073">
    <property type="term" value="P:aromatic amino acid family biosynthetic process"/>
    <property type="evidence" value="ECO:0007669"/>
    <property type="project" value="UniProtKB-KW"/>
</dbReference>
<dbReference type="GO" id="GO:0009423">
    <property type="term" value="P:chorismate biosynthetic process"/>
    <property type="evidence" value="ECO:0007669"/>
    <property type="project" value="UniProtKB-UniRule"/>
</dbReference>
<dbReference type="CDD" id="cd00502">
    <property type="entry name" value="DHQase_I"/>
    <property type="match status" value="1"/>
</dbReference>
<dbReference type="Gene3D" id="3.20.20.70">
    <property type="entry name" value="Aldolase class I"/>
    <property type="match status" value="1"/>
</dbReference>
<dbReference type="HAMAP" id="MF_00214">
    <property type="entry name" value="AroD"/>
    <property type="match status" value="1"/>
</dbReference>
<dbReference type="InterPro" id="IPR013785">
    <property type="entry name" value="Aldolase_TIM"/>
</dbReference>
<dbReference type="InterPro" id="IPR001381">
    <property type="entry name" value="DHquinase_I"/>
</dbReference>
<dbReference type="InterPro" id="IPR050146">
    <property type="entry name" value="Type-I_3-dehydroquinase"/>
</dbReference>
<dbReference type="NCBIfam" id="TIGR01093">
    <property type="entry name" value="aroD"/>
    <property type="match status" value="1"/>
</dbReference>
<dbReference type="PANTHER" id="PTHR43699">
    <property type="entry name" value="3-DEHYDROQUINATE DEHYDRATASE"/>
    <property type="match status" value="1"/>
</dbReference>
<dbReference type="PANTHER" id="PTHR43699:SF1">
    <property type="entry name" value="3-DEHYDROQUINATE DEHYDRATASE"/>
    <property type="match status" value="1"/>
</dbReference>
<dbReference type="Pfam" id="PF01487">
    <property type="entry name" value="DHquinase_I"/>
    <property type="match status" value="1"/>
</dbReference>
<dbReference type="SUPFAM" id="SSF51569">
    <property type="entry name" value="Aldolase"/>
    <property type="match status" value="1"/>
</dbReference>
<evidence type="ECO:0000255" key="1">
    <source>
        <dbReference type="HAMAP-Rule" id="MF_00214"/>
    </source>
</evidence>
<feature type="chain" id="PRO_1000043199" description="3-dehydroquinate dehydratase">
    <location>
        <begin position="1"/>
        <end position="228"/>
    </location>
</feature>
<feature type="active site" description="Proton donor/acceptor" evidence="1">
    <location>
        <position position="118"/>
    </location>
</feature>
<feature type="active site" description="Schiff-base intermediate with substrate" evidence="1">
    <location>
        <position position="143"/>
    </location>
</feature>
<feature type="binding site" evidence="1">
    <location>
        <begin position="30"/>
        <end position="32"/>
    </location>
    <ligand>
        <name>3-dehydroquinate</name>
        <dbReference type="ChEBI" id="CHEBI:32364"/>
    </ligand>
</feature>
<feature type="binding site" evidence="1">
    <location>
        <position position="62"/>
    </location>
    <ligand>
        <name>3-dehydroquinate</name>
        <dbReference type="ChEBI" id="CHEBI:32364"/>
    </ligand>
</feature>
<feature type="binding site" evidence="1">
    <location>
        <position position="186"/>
    </location>
    <ligand>
        <name>3-dehydroquinate</name>
        <dbReference type="ChEBI" id="CHEBI:32364"/>
    </ligand>
</feature>
<feature type="binding site" evidence="1">
    <location>
        <position position="205"/>
    </location>
    <ligand>
        <name>3-dehydroquinate</name>
        <dbReference type="ChEBI" id="CHEBI:32364"/>
    </ligand>
</feature>
<feature type="binding site" evidence="1">
    <location>
        <position position="209"/>
    </location>
    <ligand>
        <name>3-dehydroquinate</name>
        <dbReference type="ChEBI" id="CHEBI:32364"/>
    </ligand>
</feature>
<protein>
    <recommendedName>
        <fullName evidence="1">3-dehydroquinate dehydratase</fullName>
        <shortName evidence="1">3-dehydroquinase</shortName>
        <ecNumber evidence="1">4.2.1.10</ecNumber>
    </recommendedName>
    <alternativeName>
        <fullName evidence="1">Type I DHQase</fullName>
    </alternativeName>
    <alternativeName>
        <fullName evidence="1">Type I dehydroquinase</fullName>
        <shortName evidence="1">DHQ1</shortName>
    </alternativeName>
</protein>
<keyword id="KW-0028">Amino-acid biosynthesis</keyword>
<keyword id="KW-0057">Aromatic amino acid biosynthesis</keyword>
<keyword id="KW-0456">Lyase</keyword>
<keyword id="KW-0704">Schiff base</keyword>
<reference key="1">
    <citation type="journal article" date="2006" name="Proc. Natl. Acad. Sci. U.S.A.">
        <title>Molecular genetic anatomy of inter- and intraserotype variation in the human bacterial pathogen group A Streptococcus.</title>
        <authorList>
            <person name="Beres S.B."/>
            <person name="Richter E.W."/>
            <person name="Nagiec M.J."/>
            <person name="Sumby P."/>
            <person name="Porcella S.F."/>
            <person name="DeLeo F.R."/>
            <person name="Musser J.M."/>
        </authorList>
    </citation>
    <scope>NUCLEOTIDE SEQUENCE [LARGE SCALE GENOMIC DNA]</scope>
    <source>
        <strain>MGAS10750</strain>
    </source>
</reference>
<accession>Q1J7B3</accession>
<name>AROD_STRPF</name>
<proteinExistence type="inferred from homology"/>
<gene>
    <name evidence="1" type="primary">aroD</name>
    <name type="ordered locus">MGAS10750_Spy0711</name>
</gene>
<sequence>MRIVAPVMPRHFDEAQAIDISKYEDVNLIEWRADFLPKDEIVAVAPAIFEKFAGKEIIFTLRTVQEGGNITLSSQEYVDIIKEINAIYNPDYIDFEYFTHKSVFQEMLDFPNLILSYHNFEETPENLMEAFSEMTKLAPRVVKIAVMPQSEQDVLDLMNYTRGFKTLNPEQEFATISMGKLGRLSRFAGDVIGSSWTYVSLDHVSGPGQVTLNDMKRIIEVLEMDISN</sequence>
<organism>
    <name type="scientific">Streptococcus pyogenes serotype M4 (strain MGAS10750)</name>
    <dbReference type="NCBI Taxonomy" id="370554"/>
    <lineage>
        <taxon>Bacteria</taxon>
        <taxon>Bacillati</taxon>
        <taxon>Bacillota</taxon>
        <taxon>Bacilli</taxon>
        <taxon>Lactobacillales</taxon>
        <taxon>Streptococcaceae</taxon>
        <taxon>Streptococcus</taxon>
    </lineage>
</organism>
<comment type="function">
    <text evidence="1">Involved in the third step of the chorismate pathway, which leads to the biosynthesis of aromatic amino acids. Catalyzes the cis-dehydration of 3-dehydroquinate (DHQ) and introduces the first double bond of the aromatic ring to yield 3-dehydroshikimate.</text>
</comment>
<comment type="catalytic activity">
    <reaction evidence="1">
        <text>3-dehydroquinate = 3-dehydroshikimate + H2O</text>
        <dbReference type="Rhea" id="RHEA:21096"/>
        <dbReference type="ChEBI" id="CHEBI:15377"/>
        <dbReference type="ChEBI" id="CHEBI:16630"/>
        <dbReference type="ChEBI" id="CHEBI:32364"/>
        <dbReference type="EC" id="4.2.1.10"/>
    </reaction>
</comment>
<comment type="pathway">
    <text evidence="1">Metabolic intermediate biosynthesis; chorismate biosynthesis; chorismate from D-erythrose 4-phosphate and phosphoenolpyruvate: step 3/7.</text>
</comment>
<comment type="subunit">
    <text evidence="1">Homodimer.</text>
</comment>
<comment type="similarity">
    <text evidence="1">Belongs to the type-I 3-dehydroquinase family.</text>
</comment>